<gene>
    <name type="primary">hpd-1</name>
    <name type="ORF">CBG18361</name>
</gene>
<organism>
    <name type="scientific">Caenorhabditis briggsae</name>
    <dbReference type="NCBI Taxonomy" id="6238"/>
    <lineage>
        <taxon>Eukaryota</taxon>
        <taxon>Metazoa</taxon>
        <taxon>Ecdysozoa</taxon>
        <taxon>Nematoda</taxon>
        <taxon>Chromadorea</taxon>
        <taxon>Rhabditida</taxon>
        <taxon>Rhabditina</taxon>
        <taxon>Rhabditomorpha</taxon>
        <taxon>Rhabditoidea</taxon>
        <taxon>Rhabditidae</taxon>
        <taxon>Peloderinae</taxon>
        <taxon>Caenorhabditis</taxon>
    </lineage>
</organism>
<proteinExistence type="inferred from homology"/>
<comment type="function">
    <text evidence="1">Key enzyme in the degradation of tyrosine.</text>
</comment>
<comment type="catalytic activity">
    <reaction>
        <text>3-(4-hydroxyphenyl)pyruvate + O2 = homogentisate + CO2</text>
        <dbReference type="Rhea" id="RHEA:16189"/>
        <dbReference type="ChEBI" id="CHEBI:15379"/>
        <dbReference type="ChEBI" id="CHEBI:16169"/>
        <dbReference type="ChEBI" id="CHEBI:16526"/>
        <dbReference type="ChEBI" id="CHEBI:36242"/>
        <dbReference type="EC" id="1.13.11.27"/>
    </reaction>
</comment>
<comment type="cofactor">
    <cofactor evidence="1">
        <name>Fe cation</name>
        <dbReference type="ChEBI" id="CHEBI:24875"/>
    </cofactor>
    <text evidence="1">Binds 1 Fe cation per subunit.</text>
</comment>
<comment type="pathway">
    <text>Amino-acid degradation; L-phenylalanine degradation; acetoacetate and fumarate from L-phenylalanine: step 3/6.</text>
</comment>
<comment type="similarity">
    <text evidence="3">Belongs to the 4HPPD family.</text>
</comment>
<keyword id="KW-0223">Dioxygenase</keyword>
<keyword id="KW-0408">Iron</keyword>
<keyword id="KW-0479">Metal-binding</keyword>
<keyword id="KW-0560">Oxidoreductase</keyword>
<keyword id="KW-0585">Phenylalanine catabolism</keyword>
<keyword id="KW-1185">Reference proteome</keyword>
<keyword id="KW-0677">Repeat</keyword>
<keyword id="KW-0828">Tyrosine catabolism</keyword>
<accession>Q60Y65</accession>
<accession>A8XSJ1</accession>
<feature type="chain" id="PRO_0000088394" description="4-hydroxyphenylpyruvate dioxygenase">
    <location>
        <begin position="1"/>
        <end position="393"/>
    </location>
</feature>
<feature type="domain" description="VOC 1" evidence="2">
    <location>
        <begin position="17"/>
        <end position="148"/>
    </location>
</feature>
<feature type="domain" description="VOC 2" evidence="2">
    <location>
        <begin position="179"/>
        <end position="339"/>
    </location>
</feature>
<feature type="binding site" evidence="1">
    <location>
        <position position="182"/>
    </location>
    <ligand>
        <name>Fe cation</name>
        <dbReference type="ChEBI" id="CHEBI:24875"/>
    </ligand>
</feature>
<feature type="binding site" evidence="1">
    <location>
        <position position="267"/>
    </location>
    <ligand>
        <name>Fe cation</name>
        <dbReference type="ChEBI" id="CHEBI:24875"/>
    </ligand>
</feature>
<feature type="binding site" evidence="1">
    <location>
        <position position="350"/>
    </location>
    <ligand>
        <name>Fe cation</name>
        <dbReference type="ChEBI" id="CHEBI:24875"/>
    </ligand>
</feature>
<evidence type="ECO:0000250" key="1"/>
<evidence type="ECO:0000255" key="2">
    <source>
        <dbReference type="PROSITE-ProRule" id="PRU01163"/>
    </source>
</evidence>
<evidence type="ECO:0000305" key="3"/>
<reference key="1">
    <citation type="journal article" date="2003" name="PLoS Biol.">
        <title>The genome sequence of Caenorhabditis briggsae: a platform for comparative genomics.</title>
        <authorList>
            <person name="Stein L.D."/>
            <person name="Bao Z."/>
            <person name="Blasiar D."/>
            <person name="Blumenthal T."/>
            <person name="Brent M.R."/>
            <person name="Chen N."/>
            <person name="Chinwalla A."/>
            <person name="Clarke L."/>
            <person name="Clee C."/>
            <person name="Coghlan A."/>
            <person name="Coulson A."/>
            <person name="D'Eustachio P."/>
            <person name="Fitch D.H.A."/>
            <person name="Fulton L.A."/>
            <person name="Fulton R.E."/>
            <person name="Griffiths-Jones S."/>
            <person name="Harris T.W."/>
            <person name="Hillier L.W."/>
            <person name="Kamath R."/>
            <person name="Kuwabara P.E."/>
            <person name="Mardis E.R."/>
            <person name="Marra M.A."/>
            <person name="Miner T.L."/>
            <person name="Minx P."/>
            <person name="Mullikin J.C."/>
            <person name="Plumb R.W."/>
            <person name="Rogers J."/>
            <person name="Schein J.E."/>
            <person name="Sohrmann M."/>
            <person name="Spieth J."/>
            <person name="Stajich J.E."/>
            <person name="Wei C."/>
            <person name="Willey D."/>
            <person name="Wilson R.K."/>
            <person name="Durbin R.M."/>
            <person name="Waterston R.H."/>
        </authorList>
    </citation>
    <scope>NUCLEOTIDE SEQUENCE [LARGE SCALE GENOMIC DNA]</scope>
    <source>
        <strain>AF16</strain>
    </source>
</reference>
<name>HPPD_CAEBR</name>
<dbReference type="EC" id="1.13.11.27"/>
<dbReference type="EMBL" id="HE600936">
    <property type="protein sequence ID" value="CAP35833.1"/>
    <property type="molecule type" value="Genomic_DNA"/>
</dbReference>
<dbReference type="SMR" id="Q60Y65"/>
<dbReference type="FunCoup" id="Q60Y65">
    <property type="interactions" value="59"/>
</dbReference>
<dbReference type="STRING" id="6238.Q60Y65"/>
<dbReference type="EnsemblMetazoa" id="CBG18361.1">
    <property type="protein sequence ID" value="CBG18361.1"/>
    <property type="gene ID" value="WBGene00037803"/>
</dbReference>
<dbReference type="KEGG" id="cbr:CBG_18361"/>
<dbReference type="CTD" id="8584357"/>
<dbReference type="WormBase" id="CBG18361">
    <property type="protein sequence ID" value="CBP04281"/>
    <property type="gene ID" value="WBGene00037803"/>
    <property type="gene designation" value="Cbr-hpd-1"/>
</dbReference>
<dbReference type="eggNOG" id="KOG0638">
    <property type="taxonomic scope" value="Eukaryota"/>
</dbReference>
<dbReference type="HOGENOM" id="CLU_034004_3_1_1"/>
<dbReference type="InParanoid" id="Q60Y65"/>
<dbReference type="OMA" id="DPFPVKG"/>
<dbReference type="OrthoDB" id="414569at2759"/>
<dbReference type="UniPathway" id="UPA00139">
    <property type="reaction ID" value="UER00362"/>
</dbReference>
<dbReference type="Proteomes" id="UP000008549">
    <property type="component" value="Unassembled WGS sequence"/>
</dbReference>
<dbReference type="GO" id="GO:0005789">
    <property type="term" value="C:endoplasmic reticulum membrane"/>
    <property type="evidence" value="ECO:0000318"/>
    <property type="project" value="GO_Central"/>
</dbReference>
<dbReference type="GO" id="GO:0000139">
    <property type="term" value="C:Golgi membrane"/>
    <property type="evidence" value="ECO:0000318"/>
    <property type="project" value="GO_Central"/>
</dbReference>
<dbReference type="GO" id="GO:0003868">
    <property type="term" value="F:4-hydroxyphenylpyruvate dioxygenase activity"/>
    <property type="evidence" value="ECO:0000250"/>
    <property type="project" value="UniProtKB"/>
</dbReference>
<dbReference type="GO" id="GO:0046872">
    <property type="term" value="F:metal ion binding"/>
    <property type="evidence" value="ECO:0007669"/>
    <property type="project" value="UniProtKB-KW"/>
</dbReference>
<dbReference type="GO" id="GO:0006559">
    <property type="term" value="P:L-phenylalanine catabolic process"/>
    <property type="evidence" value="ECO:0007669"/>
    <property type="project" value="UniProtKB-UniPathway"/>
</dbReference>
<dbReference type="GO" id="GO:0006572">
    <property type="term" value="P:tyrosine catabolic process"/>
    <property type="evidence" value="ECO:0000250"/>
    <property type="project" value="UniProtKB"/>
</dbReference>
<dbReference type="CDD" id="cd07250">
    <property type="entry name" value="HPPD_C_like"/>
    <property type="match status" value="1"/>
</dbReference>
<dbReference type="CDD" id="cd08342">
    <property type="entry name" value="HPPD_N_like"/>
    <property type="match status" value="1"/>
</dbReference>
<dbReference type="FunFam" id="3.10.180.10:FF:000001">
    <property type="entry name" value="4-hydroxyphenylpyruvate dioxygenase"/>
    <property type="match status" value="1"/>
</dbReference>
<dbReference type="FunFam" id="3.10.180.10:FF:000048">
    <property type="entry name" value="4-hydroxyphenylpyruvate dioxygenase"/>
    <property type="match status" value="1"/>
</dbReference>
<dbReference type="Gene3D" id="3.10.180.10">
    <property type="entry name" value="2,3-Dihydroxybiphenyl 1,2-Dioxygenase, domain 1"/>
    <property type="match status" value="2"/>
</dbReference>
<dbReference type="InterPro" id="IPR005956">
    <property type="entry name" value="4OHPhenylPyrv_dOase"/>
</dbReference>
<dbReference type="InterPro" id="IPR041735">
    <property type="entry name" value="4OHPhenylPyrv_dOase_C"/>
</dbReference>
<dbReference type="InterPro" id="IPR041736">
    <property type="entry name" value="4OHPhenylPyrv_dOase_N"/>
</dbReference>
<dbReference type="InterPro" id="IPR029068">
    <property type="entry name" value="Glyas_Bleomycin-R_OHBP_Dase"/>
</dbReference>
<dbReference type="InterPro" id="IPR004360">
    <property type="entry name" value="Glyas_Fos-R_dOase_dom"/>
</dbReference>
<dbReference type="InterPro" id="IPR037523">
    <property type="entry name" value="VOC"/>
</dbReference>
<dbReference type="NCBIfam" id="TIGR01263">
    <property type="entry name" value="4HPPD"/>
    <property type="match status" value="1"/>
</dbReference>
<dbReference type="PANTHER" id="PTHR11959">
    <property type="entry name" value="4-HYDROXYPHENYLPYRUVATE DIOXYGENASE"/>
    <property type="match status" value="1"/>
</dbReference>
<dbReference type="PANTHER" id="PTHR11959:SF1">
    <property type="entry name" value="4-HYDROXYPHENYLPYRUVATE DIOXYGENASE"/>
    <property type="match status" value="1"/>
</dbReference>
<dbReference type="Pfam" id="PF00903">
    <property type="entry name" value="Glyoxalase"/>
    <property type="match status" value="2"/>
</dbReference>
<dbReference type="PIRSF" id="PIRSF009283">
    <property type="entry name" value="HPP_dOase"/>
    <property type="match status" value="1"/>
</dbReference>
<dbReference type="SUPFAM" id="SSF54593">
    <property type="entry name" value="Glyoxalase/Bleomycin resistance protein/Dihydroxybiphenyl dioxygenase"/>
    <property type="match status" value="1"/>
</dbReference>
<dbReference type="PROSITE" id="PS51819">
    <property type="entry name" value="VOC"/>
    <property type="match status" value="2"/>
</dbReference>
<protein>
    <recommendedName>
        <fullName>4-hydroxyphenylpyruvate dioxygenase</fullName>
        <ecNumber>1.13.11.27</ecNumber>
    </recommendedName>
    <alternativeName>
        <fullName>4-hydroxyphenylpyruvic acid oxidase</fullName>
        <shortName>4HPPD</shortName>
        <shortName>HPD</shortName>
        <shortName>HPPDase</shortName>
    </alternativeName>
</protein>
<sequence length="393" mass="44600">MTTFDRGEKPDIGTLVAFDHVRFVVGNAKQAAYWYCANFGFEPFAYKGLETGSRITAQHAIKQDKIVFVFESALLPDNTELGEHLVQHGDGVKDVCFEVEDLDSIVAHAKAAGATIVRDITEESDENGSVRFATLRTYGETDHTLLERKKYKGAFLPGFKPHPMPPTFFHSLPRVGLNFLDHCVGNQPDLQMAPAVEWYENILKFHRFWSVDDSMIHTEYSALRSIVVTNFEETIKMPINEPASSNKKAVSQIQEFVDYYGGSGVQHIALNTTDIITAIEALRARGCEFLSIPSSYYDNLRQRLSVSSMKIKEDMDRLQKLHILVDFDENGYLLQIFSKPCQDRPTLFLEIIQRQNHQGFGAGNFKALFESIELEQTKRGNLFYENVKDGQHK</sequence>